<proteinExistence type="inferred from homology"/>
<evidence type="ECO:0000255" key="1">
    <source>
        <dbReference type="HAMAP-Rule" id="MF_01576"/>
    </source>
</evidence>
<gene>
    <name evidence="1" type="primary">folD</name>
    <name type="ordered locus">NWMN_0932</name>
</gene>
<dbReference type="EC" id="1.5.1.5" evidence="1"/>
<dbReference type="EC" id="3.5.4.9" evidence="1"/>
<dbReference type="EMBL" id="AP009351">
    <property type="protein sequence ID" value="BAF67204.1"/>
    <property type="molecule type" value="Genomic_DNA"/>
</dbReference>
<dbReference type="RefSeq" id="WP_000225837.1">
    <property type="nucleotide sequence ID" value="NZ_JBBIAE010000002.1"/>
</dbReference>
<dbReference type="SMR" id="A6QFS2"/>
<dbReference type="KEGG" id="sae:NWMN_0932"/>
<dbReference type="HOGENOM" id="CLU_034045_2_1_9"/>
<dbReference type="UniPathway" id="UPA00193"/>
<dbReference type="Proteomes" id="UP000006386">
    <property type="component" value="Chromosome"/>
</dbReference>
<dbReference type="GO" id="GO:0005829">
    <property type="term" value="C:cytosol"/>
    <property type="evidence" value="ECO:0007669"/>
    <property type="project" value="TreeGrafter"/>
</dbReference>
<dbReference type="GO" id="GO:0004477">
    <property type="term" value="F:methenyltetrahydrofolate cyclohydrolase activity"/>
    <property type="evidence" value="ECO:0007669"/>
    <property type="project" value="UniProtKB-UniRule"/>
</dbReference>
<dbReference type="GO" id="GO:0004488">
    <property type="term" value="F:methylenetetrahydrofolate dehydrogenase (NADP+) activity"/>
    <property type="evidence" value="ECO:0007669"/>
    <property type="project" value="UniProtKB-UniRule"/>
</dbReference>
<dbReference type="GO" id="GO:0000105">
    <property type="term" value="P:L-histidine biosynthetic process"/>
    <property type="evidence" value="ECO:0007669"/>
    <property type="project" value="UniProtKB-KW"/>
</dbReference>
<dbReference type="GO" id="GO:0009086">
    <property type="term" value="P:methionine biosynthetic process"/>
    <property type="evidence" value="ECO:0007669"/>
    <property type="project" value="UniProtKB-KW"/>
</dbReference>
<dbReference type="GO" id="GO:0006164">
    <property type="term" value="P:purine nucleotide biosynthetic process"/>
    <property type="evidence" value="ECO:0007669"/>
    <property type="project" value="UniProtKB-KW"/>
</dbReference>
<dbReference type="GO" id="GO:0035999">
    <property type="term" value="P:tetrahydrofolate interconversion"/>
    <property type="evidence" value="ECO:0007669"/>
    <property type="project" value="UniProtKB-UniRule"/>
</dbReference>
<dbReference type="CDD" id="cd01080">
    <property type="entry name" value="NAD_bind_m-THF_DH_Cyclohyd"/>
    <property type="match status" value="1"/>
</dbReference>
<dbReference type="FunFam" id="3.40.50.10860:FF:000001">
    <property type="entry name" value="Bifunctional protein FolD"/>
    <property type="match status" value="1"/>
</dbReference>
<dbReference type="FunFam" id="3.40.50.720:FF:000094">
    <property type="entry name" value="Bifunctional protein FolD"/>
    <property type="match status" value="1"/>
</dbReference>
<dbReference type="Gene3D" id="3.40.50.10860">
    <property type="entry name" value="Leucine Dehydrogenase, chain A, domain 1"/>
    <property type="match status" value="1"/>
</dbReference>
<dbReference type="Gene3D" id="3.40.50.720">
    <property type="entry name" value="NAD(P)-binding Rossmann-like Domain"/>
    <property type="match status" value="1"/>
</dbReference>
<dbReference type="HAMAP" id="MF_01576">
    <property type="entry name" value="THF_DHG_CYH"/>
    <property type="match status" value="1"/>
</dbReference>
<dbReference type="InterPro" id="IPR046346">
    <property type="entry name" value="Aminoacid_DH-like_N_sf"/>
</dbReference>
<dbReference type="InterPro" id="IPR036291">
    <property type="entry name" value="NAD(P)-bd_dom_sf"/>
</dbReference>
<dbReference type="InterPro" id="IPR000672">
    <property type="entry name" value="THF_DH/CycHdrlase"/>
</dbReference>
<dbReference type="InterPro" id="IPR020630">
    <property type="entry name" value="THF_DH/CycHdrlase_cat_dom"/>
</dbReference>
<dbReference type="InterPro" id="IPR020631">
    <property type="entry name" value="THF_DH/CycHdrlase_NAD-bd_dom"/>
</dbReference>
<dbReference type="NCBIfam" id="NF010772">
    <property type="entry name" value="PRK14175.1"/>
    <property type="match status" value="1"/>
</dbReference>
<dbReference type="PANTHER" id="PTHR48099:SF5">
    <property type="entry name" value="C-1-TETRAHYDROFOLATE SYNTHASE, CYTOPLASMIC"/>
    <property type="match status" value="1"/>
</dbReference>
<dbReference type="PANTHER" id="PTHR48099">
    <property type="entry name" value="C-1-TETRAHYDROFOLATE SYNTHASE, CYTOPLASMIC-RELATED"/>
    <property type="match status" value="1"/>
</dbReference>
<dbReference type="Pfam" id="PF00763">
    <property type="entry name" value="THF_DHG_CYH"/>
    <property type="match status" value="1"/>
</dbReference>
<dbReference type="Pfam" id="PF02882">
    <property type="entry name" value="THF_DHG_CYH_C"/>
    <property type="match status" value="1"/>
</dbReference>
<dbReference type="PRINTS" id="PR00085">
    <property type="entry name" value="THFDHDRGNASE"/>
</dbReference>
<dbReference type="SUPFAM" id="SSF53223">
    <property type="entry name" value="Aminoacid dehydrogenase-like, N-terminal domain"/>
    <property type="match status" value="1"/>
</dbReference>
<dbReference type="SUPFAM" id="SSF51735">
    <property type="entry name" value="NAD(P)-binding Rossmann-fold domains"/>
    <property type="match status" value="1"/>
</dbReference>
<name>FOLD_STAAE</name>
<protein>
    <recommendedName>
        <fullName evidence="1">Bifunctional protein FolD</fullName>
    </recommendedName>
    <domain>
        <recommendedName>
            <fullName evidence="1">Methylenetetrahydrofolate dehydrogenase</fullName>
            <ecNumber evidence="1">1.5.1.5</ecNumber>
        </recommendedName>
    </domain>
    <domain>
        <recommendedName>
            <fullName evidence="1">Methenyltetrahydrofolate cyclohydrolase</fullName>
            <ecNumber evidence="1">3.5.4.9</ecNumber>
        </recommendedName>
    </domain>
</protein>
<keyword id="KW-0028">Amino-acid biosynthesis</keyword>
<keyword id="KW-0368">Histidine biosynthesis</keyword>
<keyword id="KW-0378">Hydrolase</keyword>
<keyword id="KW-0486">Methionine biosynthesis</keyword>
<keyword id="KW-0511">Multifunctional enzyme</keyword>
<keyword id="KW-0521">NADP</keyword>
<keyword id="KW-0554">One-carbon metabolism</keyword>
<keyword id="KW-0560">Oxidoreductase</keyword>
<keyword id="KW-0658">Purine biosynthesis</keyword>
<organism>
    <name type="scientific">Staphylococcus aureus (strain Newman)</name>
    <dbReference type="NCBI Taxonomy" id="426430"/>
    <lineage>
        <taxon>Bacteria</taxon>
        <taxon>Bacillati</taxon>
        <taxon>Bacillota</taxon>
        <taxon>Bacilli</taxon>
        <taxon>Bacillales</taxon>
        <taxon>Staphylococcaceae</taxon>
        <taxon>Staphylococcus</taxon>
    </lineage>
</organism>
<accession>A6QFS2</accession>
<comment type="function">
    <text evidence="1">Catalyzes the oxidation of 5,10-methylenetetrahydrofolate to 5,10-methenyltetrahydrofolate and then the hydrolysis of 5,10-methenyltetrahydrofolate to 10-formyltetrahydrofolate.</text>
</comment>
<comment type="catalytic activity">
    <reaction evidence="1">
        <text>(6R)-5,10-methylene-5,6,7,8-tetrahydrofolate + NADP(+) = (6R)-5,10-methenyltetrahydrofolate + NADPH</text>
        <dbReference type="Rhea" id="RHEA:22812"/>
        <dbReference type="ChEBI" id="CHEBI:15636"/>
        <dbReference type="ChEBI" id="CHEBI:57455"/>
        <dbReference type="ChEBI" id="CHEBI:57783"/>
        <dbReference type="ChEBI" id="CHEBI:58349"/>
        <dbReference type="EC" id="1.5.1.5"/>
    </reaction>
</comment>
<comment type="catalytic activity">
    <reaction evidence="1">
        <text>(6R)-5,10-methenyltetrahydrofolate + H2O = (6R)-10-formyltetrahydrofolate + H(+)</text>
        <dbReference type="Rhea" id="RHEA:23700"/>
        <dbReference type="ChEBI" id="CHEBI:15377"/>
        <dbReference type="ChEBI" id="CHEBI:15378"/>
        <dbReference type="ChEBI" id="CHEBI:57455"/>
        <dbReference type="ChEBI" id="CHEBI:195366"/>
        <dbReference type="EC" id="3.5.4.9"/>
    </reaction>
</comment>
<comment type="pathway">
    <text evidence="1">One-carbon metabolism; tetrahydrofolate interconversion.</text>
</comment>
<comment type="subunit">
    <text evidence="1">Homodimer.</text>
</comment>
<comment type="similarity">
    <text evidence="1">Belongs to the tetrahydrofolate dehydrogenase/cyclohydrolase family.</text>
</comment>
<sequence length="286" mass="30844">MVAKILDGKQIAKDYRQGLQDQVEALKEKGFTPKLSVILVGNDGASQSYVRSKKKAAEKIGMISEIVHLEETATEEEVLNELNRLNNDDSVSGILVQVPLPKQVSEQKILEAINPEKDVDGFHPINIGKLYIDEQTFVPCTPLGIMEILKHADIDLEGKNAVVIGRSHIVGQPVSKLLLQKNASVTILHSRSKDMASYLKDADVIVSAVGKPGLVTKDVVKEGAVIIDVGNTPDENGKLKGDVDYDAVKEIAGAITPVPGGVGPLTITMVLNNTLLAEKMRRGIDS</sequence>
<feature type="chain" id="PRO_0000318790" description="Bifunctional protein FolD">
    <location>
        <begin position="1"/>
        <end position="286"/>
    </location>
</feature>
<feature type="binding site" evidence="1">
    <location>
        <begin position="165"/>
        <end position="167"/>
    </location>
    <ligand>
        <name>NADP(+)</name>
        <dbReference type="ChEBI" id="CHEBI:58349"/>
    </ligand>
</feature>
<feature type="binding site" evidence="1">
    <location>
        <position position="190"/>
    </location>
    <ligand>
        <name>NADP(+)</name>
        <dbReference type="ChEBI" id="CHEBI:58349"/>
    </ligand>
</feature>
<reference key="1">
    <citation type="journal article" date="2008" name="J. Bacteriol.">
        <title>Genome sequence of Staphylococcus aureus strain Newman and comparative analysis of staphylococcal genomes: polymorphism and evolution of two major pathogenicity islands.</title>
        <authorList>
            <person name="Baba T."/>
            <person name="Bae T."/>
            <person name="Schneewind O."/>
            <person name="Takeuchi F."/>
            <person name="Hiramatsu K."/>
        </authorList>
    </citation>
    <scope>NUCLEOTIDE SEQUENCE [LARGE SCALE GENOMIC DNA]</scope>
    <source>
        <strain>Newman</strain>
    </source>
</reference>